<keyword id="KW-1185">Reference proteome</keyword>
<proteinExistence type="predicted"/>
<reference key="1">
    <citation type="journal article" date="2001" name="Proc. Natl. Acad. Sci. U.S.A.">
        <title>Complete genomic sequence of Pasteurella multocida Pm70.</title>
        <authorList>
            <person name="May B.J."/>
            <person name="Zhang Q."/>
            <person name="Li L.L."/>
            <person name="Paustian M.L."/>
            <person name="Whittam T.S."/>
            <person name="Kapur V."/>
        </authorList>
    </citation>
    <scope>NUCLEOTIDE SEQUENCE [LARGE SCALE GENOMIC DNA]</scope>
    <source>
        <strain>Pm70</strain>
    </source>
</reference>
<sequence>MSTTQTNQTPIKKYYSINELTALGIGSRTKIDRLAKQGLLKKIKIGGSVRFSADEVNAFIQSTNA</sequence>
<name>Y1772_PASMU</name>
<accession>Q9CK62</accession>
<gene>
    <name type="ordered locus">PM1772</name>
</gene>
<feature type="chain" id="PRO_0000216330" description="Uncharacterized protein PM1772">
    <location>
        <begin position="1"/>
        <end position="65"/>
    </location>
</feature>
<protein>
    <recommendedName>
        <fullName>Uncharacterized protein PM1772</fullName>
    </recommendedName>
</protein>
<dbReference type="EMBL" id="AE004439">
    <property type="protein sequence ID" value="AAK03856.1"/>
    <property type="molecule type" value="Genomic_DNA"/>
</dbReference>
<dbReference type="RefSeq" id="WP_005764228.1">
    <property type="nucleotide sequence ID" value="NC_002663.1"/>
</dbReference>
<dbReference type="SMR" id="Q9CK62"/>
<dbReference type="STRING" id="272843.PM1772"/>
<dbReference type="EnsemblBacteria" id="AAK03856">
    <property type="protein sequence ID" value="AAK03856"/>
    <property type="gene ID" value="PM1772"/>
</dbReference>
<dbReference type="KEGG" id="pmu:PM1772"/>
<dbReference type="HOGENOM" id="CLU_2845888_0_0_6"/>
<dbReference type="OrthoDB" id="5689377at2"/>
<dbReference type="Proteomes" id="UP000000809">
    <property type="component" value="Chromosome"/>
</dbReference>
<dbReference type="InterPro" id="IPR041657">
    <property type="entry name" value="HTH_17"/>
</dbReference>
<dbReference type="Pfam" id="PF12728">
    <property type="entry name" value="HTH_17"/>
    <property type="match status" value="1"/>
</dbReference>
<organism>
    <name type="scientific">Pasteurella multocida (strain Pm70)</name>
    <dbReference type="NCBI Taxonomy" id="272843"/>
    <lineage>
        <taxon>Bacteria</taxon>
        <taxon>Pseudomonadati</taxon>
        <taxon>Pseudomonadota</taxon>
        <taxon>Gammaproteobacteria</taxon>
        <taxon>Pasteurellales</taxon>
        <taxon>Pasteurellaceae</taxon>
        <taxon>Pasteurella</taxon>
    </lineage>
</organism>